<dbReference type="EC" id="6.3.2.8" evidence="1"/>
<dbReference type="EMBL" id="BA000016">
    <property type="protein sequence ID" value="BAB82199.1"/>
    <property type="status" value="ALT_INIT"/>
    <property type="molecule type" value="Genomic_DNA"/>
</dbReference>
<dbReference type="RefSeq" id="WP_041707946.1">
    <property type="nucleotide sequence ID" value="NC_003366.1"/>
</dbReference>
<dbReference type="SMR" id="Q8XHJ0"/>
<dbReference type="STRING" id="195102.gene:10491827"/>
<dbReference type="KEGG" id="cpe:CPE2493"/>
<dbReference type="HOGENOM" id="CLU_028104_1_0_9"/>
<dbReference type="UniPathway" id="UPA00219"/>
<dbReference type="Proteomes" id="UP000000818">
    <property type="component" value="Chromosome"/>
</dbReference>
<dbReference type="GO" id="GO:0005737">
    <property type="term" value="C:cytoplasm"/>
    <property type="evidence" value="ECO:0007669"/>
    <property type="project" value="UniProtKB-SubCell"/>
</dbReference>
<dbReference type="GO" id="GO:0005524">
    <property type="term" value="F:ATP binding"/>
    <property type="evidence" value="ECO:0007669"/>
    <property type="project" value="UniProtKB-UniRule"/>
</dbReference>
<dbReference type="GO" id="GO:0008763">
    <property type="term" value="F:UDP-N-acetylmuramate-L-alanine ligase activity"/>
    <property type="evidence" value="ECO:0007669"/>
    <property type="project" value="UniProtKB-UniRule"/>
</dbReference>
<dbReference type="GO" id="GO:0051301">
    <property type="term" value="P:cell division"/>
    <property type="evidence" value="ECO:0007669"/>
    <property type="project" value="UniProtKB-KW"/>
</dbReference>
<dbReference type="GO" id="GO:0071555">
    <property type="term" value="P:cell wall organization"/>
    <property type="evidence" value="ECO:0007669"/>
    <property type="project" value="UniProtKB-KW"/>
</dbReference>
<dbReference type="GO" id="GO:0009252">
    <property type="term" value="P:peptidoglycan biosynthetic process"/>
    <property type="evidence" value="ECO:0007669"/>
    <property type="project" value="UniProtKB-UniRule"/>
</dbReference>
<dbReference type="GO" id="GO:0008360">
    <property type="term" value="P:regulation of cell shape"/>
    <property type="evidence" value="ECO:0007669"/>
    <property type="project" value="UniProtKB-KW"/>
</dbReference>
<dbReference type="Gene3D" id="3.90.190.20">
    <property type="entry name" value="Mur ligase, C-terminal domain"/>
    <property type="match status" value="1"/>
</dbReference>
<dbReference type="Gene3D" id="3.40.1190.10">
    <property type="entry name" value="Mur-like, catalytic domain"/>
    <property type="match status" value="1"/>
</dbReference>
<dbReference type="Gene3D" id="3.40.50.720">
    <property type="entry name" value="NAD(P)-binding Rossmann-like Domain"/>
    <property type="match status" value="1"/>
</dbReference>
<dbReference type="HAMAP" id="MF_00046">
    <property type="entry name" value="MurC"/>
    <property type="match status" value="1"/>
</dbReference>
<dbReference type="InterPro" id="IPR036565">
    <property type="entry name" value="Mur-like_cat_sf"/>
</dbReference>
<dbReference type="InterPro" id="IPR004101">
    <property type="entry name" value="Mur_ligase_C"/>
</dbReference>
<dbReference type="InterPro" id="IPR036615">
    <property type="entry name" value="Mur_ligase_C_dom_sf"/>
</dbReference>
<dbReference type="InterPro" id="IPR013221">
    <property type="entry name" value="Mur_ligase_cen"/>
</dbReference>
<dbReference type="InterPro" id="IPR000713">
    <property type="entry name" value="Mur_ligase_N"/>
</dbReference>
<dbReference type="InterPro" id="IPR050061">
    <property type="entry name" value="MurCDEF_pg_biosynth"/>
</dbReference>
<dbReference type="InterPro" id="IPR005758">
    <property type="entry name" value="UDP-N-AcMur_Ala_ligase_MurC"/>
</dbReference>
<dbReference type="NCBIfam" id="TIGR01082">
    <property type="entry name" value="murC"/>
    <property type="match status" value="1"/>
</dbReference>
<dbReference type="PANTHER" id="PTHR43445:SF3">
    <property type="entry name" value="UDP-N-ACETYLMURAMATE--L-ALANINE LIGASE"/>
    <property type="match status" value="1"/>
</dbReference>
<dbReference type="PANTHER" id="PTHR43445">
    <property type="entry name" value="UDP-N-ACETYLMURAMATE--L-ALANINE LIGASE-RELATED"/>
    <property type="match status" value="1"/>
</dbReference>
<dbReference type="Pfam" id="PF01225">
    <property type="entry name" value="Mur_ligase"/>
    <property type="match status" value="1"/>
</dbReference>
<dbReference type="Pfam" id="PF02875">
    <property type="entry name" value="Mur_ligase_C"/>
    <property type="match status" value="1"/>
</dbReference>
<dbReference type="Pfam" id="PF08245">
    <property type="entry name" value="Mur_ligase_M"/>
    <property type="match status" value="1"/>
</dbReference>
<dbReference type="SUPFAM" id="SSF51984">
    <property type="entry name" value="MurCD N-terminal domain"/>
    <property type="match status" value="1"/>
</dbReference>
<dbReference type="SUPFAM" id="SSF53623">
    <property type="entry name" value="MurD-like peptide ligases, catalytic domain"/>
    <property type="match status" value="1"/>
</dbReference>
<dbReference type="SUPFAM" id="SSF53244">
    <property type="entry name" value="MurD-like peptide ligases, peptide-binding domain"/>
    <property type="match status" value="1"/>
</dbReference>
<protein>
    <recommendedName>
        <fullName evidence="1">UDP-N-acetylmuramate--L-alanine ligase</fullName>
        <ecNumber evidence="1">6.3.2.8</ecNumber>
    </recommendedName>
    <alternativeName>
        <fullName evidence="1">UDP-N-acetylmuramoyl-L-alanine synthetase</fullName>
    </alternativeName>
</protein>
<comment type="function">
    <text evidence="1">Cell wall formation.</text>
</comment>
<comment type="catalytic activity">
    <reaction evidence="1">
        <text>UDP-N-acetyl-alpha-D-muramate + L-alanine + ATP = UDP-N-acetyl-alpha-D-muramoyl-L-alanine + ADP + phosphate + H(+)</text>
        <dbReference type="Rhea" id="RHEA:23372"/>
        <dbReference type="ChEBI" id="CHEBI:15378"/>
        <dbReference type="ChEBI" id="CHEBI:30616"/>
        <dbReference type="ChEBI" id="CHEBI:43474"/>
        <dbReference type="ChEBI" id="CHEBI:57972"/>
        <dbReference type="ChEBI" id="CHEBI:70757"/>
        <dbReference type="ChEBI" id="CHEBI:83898"/>
        <dbReference type="ChEBI" id="CHEBI:456216"/>
        <dbReference type="EC" id="6.3.2.8"/>
    </reaction>
</comment>
<comment type="pathway">
    <text evidence="1">Cell wall biogenesis; peptidoglycan biosynthesis.</text>
</comment>
<comment type="subcellular location">
    <subcellularLocation>
        <location evidence="1">Cytoplasm</location>
    </subcellularLocation>
</comment>
<comment type="similarity">
    <text evidence="1">Belongs to the MurCDEF family.</text>
</comment>
<comment type="sequence caution" evidence="2">
    <conflict type="erroneous initiation">
        <sequence resource="EMBL-CDS" id="BAB82199"/>
    </conflict>
</comment>
<accession>Q8XHJ0</accession>
<reference key="1">
    <citation type="journal article" date="2002" name="Proc. Natl. Acad. Sci. U.S.A.">
        <title>Complete genome sequence of Clostridium perfringens, an anaerobic flesh-eater.</title>
        <authorList>
            <person name="Shimizu T."/>
            <person name="Ohtani K."/>
            <person name="Hirakawa H."/>
            <person name="Ohshima K."/>
            <person name="Yamashita A."/>
            <person name="Shiba T."/>
            <person name="Ogasawara N."/>
            <person name="Hattori M."/>
            <person name="Kuhara S."/>
            <person name="Hayashi H."/>
        </authorList>
    </citation>
    <scope>NUCLEOTIDE SEQUENCE [LARGE SCALE GENOMIC DNA]</scope>
    <source>
        <strain>13 / Type A</strain>
    </source>
</reference>
<gene>
    <name evidence="1" type="primary">murC</name>
    <name type="ordered locus">CPE2493</name>
</gene>
<evidence type="ECO:0000255" key="1">
    <source>
        <dbReference type="HAMAP-Rule" id="MF_00046"/>
    </source>
</evidence>
<evidence type="ECO:0000305" key="2"/>
<name>MURC_CLOPE</name>
<proteinExistence type="inferred from homology"/>
<feature type="chain" id="PRO_0000182080" description="UDP-N-acetylmuramate--L-alanine ligase">
    <location>
        <begin position="1"/>
        <end position="457"/>
    </location>
</feature>
<feature type="binding site" evidence="1">
    <location>
        <begin position="118"/>
        <end position="124"/>
    </location>
    <ligand>
        <name>ATP</name>
        <dbReference type="ChEBI" id="CHEBI:30616"/>
    </ligand>
</feature>
<sequence>MSFDLLKDINKKVHFIGIGGVSMSGLAAVLLNAGYKVSGSDSKESEITNRLKEEGAKIYIGHSKDNLQDVDVVVYTAAIPSDNPEIIKAKEDNLILMDRAEFLGQIMKGHKFNVAVAGTHGKTTTTSMISHVALSADLDPTILVGGDLDIIHGNFRVGNSEYFITEACEYKQSFLRFFPYVGIILNIDADHLDFYKDINHIKDTFKQFVRLIPNDGYIIGNADDEKVMEVLEVAKCNVLTYGINNGDIQARNIEFNEKGCATFDVFRNEEKLLSLSLNVPGMHNVSNSLSAVCLAEIFNINADSIVSGLSSFGGAHKRFEYKGTKNDITVIDDYAHHPVEIKATLSTAKKMNHNRIVCVFQPHTYTRTKTLFNDFVKCFDDCDELVLMDIYAAREKDLGEINSDQLGDAIRAHGVKCTNVHSHEEALEYVNANLSKGDLLLTVGAGDVVKVGELFLK</sequence>
<keyword id="KW-0067">ATP-binding</keyword>
<keyword id="KW-0131">Cell cycle</keyword>
<keyword id="KW-0132">Cell division</keyword>
<keyword id="KW-0133">Cell shape</keyword>
<keyword id="KW-0961">Cell wall biogenesis/degradation</keyword>
<keyword id="KW-0963">Cytoplasm</keyword>
<keyword id="KW-0436">Ligase</keyword>
<keyword id="KW-0547">Nucleotide-binding</keyword>
<keyword id="KW-0573">Peptidoglycan synthesis</keyword>
<keyword id="KW-1185">Reference proteome</keyword>
<organism>
    <name type="scientific">Clostridium perfringens (strain 13 / Type A)</name>
    <dbReference type="NCBI Taxonomy" id="195102"/>
    <lineage>
        <taxon>Bacteria</taxon>
        <taxon>Bacillati</taxon>
        <taxon>Bacillota</taxon>
        <taxon>Clostridia</taxon>
        <taxon>Eubacteriales</taxon>
        <taxon>Clostridiaceae</taxon>
        <taxon>Clostridium</taxon>
    </lineage>
</organism>